<evidence type="ECO:0000255" key="1">
    <source>
        <dbReference type="HAMAP-Rule" id="MF_00082"/>
    </source>
</evidence>
<gene>
    <name evidence="1" type="primary">argB</name>
    <name type="ordered locus">alr1245</name>
</gene>
<accession>Q8YXG8</accession>
<organism>
    <name type="scientific">Nostoc sp. (strain PCC 7120 / SAG 25.82 / UTEX 2576)</name>
    <dbReference type="NCBI Taxonomy" id="103690"/>
    <lineage>
        <taxon>Bacteria</taxon>
        <taxon>Bacillati</taxon>
        <taxon>Cyanobacteriota</taxon>
        <taxon>Cyanophyceae</taxon>
        <taxon>Nostocales</taxon>
        <taxon>Nostocaceae</taxon>
        <taxon>Nostoc</taxon>
    </lineage>
</organism>
<comment type="function">
    <text evidence="1">Catalyzes the ATP-dependent phosphorylation of N-acetyl-L-glutamate.</text>
</comment>
<comment type="catalytic activity">
    <reaction evidence="1">
        <text>N-acetyl-L-glutamate + ATP = N-acetyl-L-glutamyl 5-phosphate + ADP</text>
        <dbReference type="Rhea" id="RHEA:14629"/>
        <dbReference type="ChEBI" id="CHEBI:30616"/>
        <dbReference type="ChEBI" id="CHEBI:44337"/>
        <dbReference type="ChEBI" id="CHEBI:57936"/>
        <dbReference type="ChEBI" id="CHEBI:456216"/>
        <dbReference type="EC" id="2.7.2.8"/>
    </reaction>
</comment>
<comment type="pathway">
    <text evidence="1">Amino-acid biosynthesis; L-arginine biosynthesis; N(2)-acetyl-L-ornithine from L-glutamate: step 2/4.</text>
</comment>
<comment type="subcellular location">
    <subcellularLocation>
        <location evidence="1">Cytoplasm</location>
    </subcellularLocation>
</comment>
<comment type="similarity">
    <text evidence="1">Belongs to the acetylglutamate kinase family. ArgB subfamily.</text>
</comment>
<reference key="1">
    <citation type="journal article" date="2001" name="DNA Res.">
        <title>Complete genomic sequence of the filamentous nitrogen-fixing cyanobacterium Anabaena sp. strain PCC 7120.</title>
        <authorList>
            <person name="Kaneko T."/>
            <person name="Nakamura Y."/>
            <person name="Wolk C.P."/>
            <person name="Kuritz T."/>
            <person name="Sasamoto S."/>
            <person name="Watanabe A."/>
            <person name="Iriguchi M."/>
            <person name="Ishikawa A."/>
            <person name="Kawashima K."/>
            <person name="Kimura T."/>
            <person name="Kishida Y."/>
            <person name="Kohara M."/>
            <person name="Matsumoto M."/>
            <person name="Matsuno A."/>
            <person name="Muraki A."/>
            <person name="Nakazaki N."/>
            <person name="Shimpo S."/>
            <person name="Sugimoto M."/>
            <person name="Takazawa M."/>
            <person name="Yamada M."/>
            <person name="Yasuda M."/>
            <person name="Tabata S."/>
        </authorList>
    </citation>
    <scope>NUCLEOTIDE SEQUENCE [LARGE SCALE GENOMIC DNA]</scope>
    <source>
        <strain>PCC 7120 / SAG 25.82 / UTEX 2576</strain>
    </source>
</reference>
<proteinExistence type="inferred from homology"/>
<name>ARGB_NOSS1</name>
<sequence>MMVNDIEYIRQAEATRVQVLSEALPYIQQFAGRTVVVKYGGAAMKDSHLKDQVIRDIVFLSCVGLRPILVHGGGPEINSWLDKLGIEAQFKNGLRVTDAPTMDVVEMVLVGRVNKEIVSLINQAGGLAVGLCGKDGNLITARPQGQEGIGFVGEVSNVNIKILETLASNGYIPVVSSVAADDSGQAYNINADTVAGEIAAALGAEKLILLTDTRGILKDYQDPGTLIPKVDIREARELINSGVVSGGMIPKVTCCVRSLAQGVRAAHIIDGRIPHALLLEIFTDVGIGTMILGSQYS</sequence>
<protein>
    <recommendedName>
        <fullName evidence="1">Acetylglutamate kinase</fullName>
        <ecNumber evidence="1">2.7.2.8</ecNumber>
    </recommendedName>
    <alternativeName>
        <fullName evidence="1">N-acetyl-L-glutamate 5-phosphotransferase</fullName>
    </alternativeName>
    <alternativeName>
        <fullName evidence="1">NAG kinase</fullName>
        <shortName evidence="1">NAGK</shortName>
    </alternativeName>
</protein>
<keyword id="KW-0028">Amino-acid biosynthesis</keyword>
<keyword id="KW-0055">Arginine biosynthesis</keyword>
<keyword id="KW-0067">ATP-binding</keyword>
<keyword id="KW-0963">Cytoplasm</keyword>
<keyword id="KW-0418">Kinase</keyword>
<keyword id="KW-0547">Nucleotide-binding</keyword>
<keyword id="KW-1185">Reference proteome</keyword>
<keyword id="KW-0808">Transferase</keyword>
<feature type="chain" id="PRO_0000112574" description="Acetylglutamate kinase">
    <location>
        <begin position="1"/>
        <end position="297"/>
    </location>
</feature>
<feature type="binding site" evidence="1">
    <location>
        <begin position="73"/>
        <end position="74"/>
    </location>
    <ligand>
        <name>substrate</name>
    </ligand>
</feature>
<feature type="binding site" evidence="1">
    <location>
        <position position="95"/>
    </location>
    <ligand>
        <name>substrate</name>
    </ligand>
</feature>
<feature type="binding site" evidence="1">
    <location>
        <position position="188"/>
    </location>
    <ligand>
        <name>substrate</name>
    </ligand>
</feature>
<feature type="site" description="Transition state stabilizer" evidence="1">
    <location>
        <position position="38"/>
    </location>
</feature>
<feature type="site" description="Transition state stabilizer" evidence="1">
    <location>
        <position position="251"/>
    </location>
</feature>
<dbReference type="EC" id="2.7.2.8" evidence="1"/>
<dbReference type="EMBL" id="BA000019">
    <property type="protein sequence ID" value="BAB73202.1"/>
    <property type="molecule type" value="Genomic_DNA"/>
</dbReference>
<dbReference type="PIR" id="AB1962">
    <property type="entry name" value="AB1962"/>
</dbReference>
<dbReference type="RefSeq" id="WP_010995417.1">
    <property type="nucleotide sequence ID" value="NZ_RSCN01000021.1"/>
</dbReference>
<dbReference type="SMR" id="Q8YXG8"/>
<dbReference type="STRING" id="103690.gene:10493259"/>
<dbReference type="KEGG" id="ana:alr1245"/>
<dbReference type="eggNOG" id="COG0548">
    <property type="taxonomic scope" value="Bacteria"/>
</dbReference>
<dbReference type="OrthoDB" id="9803155at2"/>
<dbReference type="UniPathway" id="UPA00068">
    <property type="reaction ID" value="UER00107"/>
</dbReference>
<dbReference type="Proteomes" id="UP000002483">
    <property type="component" value="Chromosome"/>
</dbReference>
<dbReference type="GO" id="GO:0005737">
    <property type="term" value="C:cytoplasm"/>
    <property type="evidence" value="ECO:0007669"/>
    <property type="project" value="UniProtKB-SubCell"/>
</dbReference>
<dbReference type="GO" id="GO:0003991">
    <property type="term" value="F:acetylglutamate kinase activity"/>
    <property type="evidence" value="ECO:0007669"/>
    <property type="project" value="UniProtKB-UniRule"/>
</dbReference>
<dbReference type="GO" id="GO:0005524">
    <property type="term" value="F:ATP binding"/>
    <property type="evidence" value="ECO:0007669"/>
    <property type="project" value="UniProtKB-UniRule"/>
</dbReference>
<dbReference type="GO" id="GO:0042450">
    <property type="term" value="P:arginine biosynthetic process via ornithine"/>
    <property type="evidence" value="ECO:0007669"/>
    <property type="project" value="UniProtKB-UniRule"/>
</dbReference>
<dbReference type="GO" id="GO:0006526">
    <property type="term" value="P:L-arginine biosynthetic process"/>
    <property type="evidence" value="ECO:0007669"/>
    <property type="project" value="UniProtKB-UniPathway"/>
</dbReference>
<dbReference type="CDD" id="cd04250">
    <property type="entry name" value="AAK_NAGK-C"/>
    <property type="match status" value="1"/>
</dbReference>
<dbReference type="FunFam" id="3.40.1160.10:FF:000004">
    <property type="entry name" value="Acetylglutamate kinase"/>
    <property type="match status" value="1"/>
</dbReference>
<dbReference type="Gene3D" id="3.40.1160.10">
    <property type="entry name" value="Acetylglutamate kinase-like"/>
    <property type="match status" value="1"/>
</dbReference>
<dbReference type="HAMAP" id="MF_00082">
    <property type="entry name" value="ArgB"/>
    <property type="match status" value="1"/>
</dbReference>
<dbReference type="InterPro" id="IPR036393">
    <property type="entry name" value="AceGlu_kinase-like_sf"/>
</dbReference>
<dbReference type="InterPro" id="IPR004662">
    <property type="entry name" value="AcgluKinase_fam"/>
</dbReference>
<dbReference type="InterPro" id="IPR037528">
    <property type="entry name" value="ArgB"/>
</dbReference>
<dbReference type="InterPro" id="IPR001048">
    <property type="entry name" value="Asp/Glu/Uridylate_kinase"/>
</dbReference>
<dbReference type="InterPro" id="IPR001057">
    <property type="entry name" value="Glu/AcGlu_kinase"/>
</dbReference>
<dbReference type="InterPro" id="IPR041727">
    <property type="entry name" value="NAGK-C"/>
</dbReference>
<dbReference type="NCBIfam" id="TIGR00761">
    <property type="entry name" value="argB"/>
    <property type="match status" value="1"/>
</dbReference>
<dbReference type="PANTHER" id="PTHR23342">
    <property type="entry name" value="N-ACETYLGLUTAMATE SYNTHASE"/>
    <property type="match status" value="1"/>
</dbReference>
<dbReference type="PANTHER" id="PTHR23342:SF0">
    <property type="entry name" value="N-ACETYLGLUTAMATE SYNTHASE, MITOCHONDRIAL"/>
    <property type="match status" value="1"/>
</dbReference>
<dbReference type="Pfam" id="PF00696">
    <property type="entry name" value="AA_kinase"/>
    <property type="match status" value="1"/>
</dbReference>
<dbReference type="PIRSF" id="PIRSF000728">
    <property type="entry name" value="NAGK"/>
    <property type="match status" value="1"/>
</dbReference>
<dbReference type="PRINTS" id="PR00474">
    <property type="entry name" value="GLU5KINASE"/>
</dbReference>
<dbReference type="SUPFAM" id="SSF53633">
    <property type="entry name" value="Carbamate kinase-like"/>
    <property type="match status" value="1"/>
</dbReference>